<organism>
    <name type="scientific">Metamycoplasma hominis</name>
    <name type="common">Mycoplasma hominis</name>
    <dbReference type="NCBI Taxonomy" id="2098"/>
    <lineage>
        <taxon>Bacteria</taxon>
        <taxon>Bacillati</taxon>
        <taxon>Mycoplasmatota</taxon>
        <taxon>Mycoplasmoidales</taxon>
        <taxon>Metamycoplasmataceae</taxon>
        <taxon>Metamycoplasma</taxon>
    </lineage>
</organism>
<proteinExistence type="inferred from homology"/>
<name>YUPP_METHO</name>
<accession>P43051</accession>
<keyword id="KW-0378">Hydrolase</keyword>
<keyword id="KW-0460">Magnesium</keyword>
<keyword id="KW-0479">Metal-binding</keyword>
<reference key="1">
    <citation type="thesis" date="1993" institute="Heinrich-Heine University / Duesseldorf" country="Germany">
        <authorList>
            <person name="Schuchart K."/>
        </authorList>
    </citation>
    <scope>NUCLEOTIDE SEQUENCE [GENOMIC DNA]</scope>
    <source>
        <strain>FBG</strain>
    </source>
</reference>
<dbReference type="EC" id="3.1.3.-"/>
<dbReference type="EMBL" id="Z27121">
    <property type="protein sequence ID" value="CAA81648.1"/>
    <property type="molecule type" value="Genomic_DNA"/>
</dbReference>
<dbReference type="SMR" id="P43051"/>
<dbReference type="GO" id="GO:0005829">
    <property type="term" value="C:cytosol"/>
    <property type="evidence" value="ECO:0007669"/>
    <property type="project" value="TreeGrafter"/>
</dbReference>
<dbReference type="GO" id="GO:0000287">
    <property type="term" value="F:magnesium ion binding"/>
    <property type="evidence" value="ECO:0007669"/>
    <property type="project" value="TreeGrafter"/>
</dbReference>
<dbReference type="GO" id="GO:0016791">
    <property type="term" value="F:phosphatase activity"/>
    <property type="evidence" value="ECO:0007669"/>
    <property type="project" value="TreeGrafter"/>
</dbReference>
<dbReference type="CDD" id="cd07516">
    <property type="entry name" value="HAD_Pase"/>
    <property type="match status" value="1"/>
</dbReference>
<dbReference type="Gene3D" id="3.30.1240.10">
    <property type="match status" value="1"/>
</dbReference>
<dbReference type="Gene3D" id="3.40.50.1000">
    <property type="entry name" value="HAD superfamily/HAD-like"/>
    <property type="match status" value="1"/>
</dbReference>
<dbReference type="InterPro" id="IPR000150">
    <property type="entry name" value="Cof"/>
</dbReference>
<dbReference type="InterPro" id="IPR036412">
    <property type="entry name" value="HAD-like_sf"/>
</dbReference>
<dbReference type="InterPro" id="IPR006379">
    <property type="entry name" value="HAD-SF_hydro_IIB"/>
</dbReference>
<dbReference type="InterPro" id="IPR023214">
    <property type="entry name" value="HAD_sf"/>
</dbReference>
<dbReference type="NCBIfam" id="TIGR00099">
    <property type="entry name" value="Cof-subfamily"/>
    <property type="match status" value="1"/>
</dbReference>
<dbReference type="NCBIfam" id="TIGR01484">
    <property type="entry name" value="HAD-SF-IIB"/>
    <property type="match status" value="1"/>
</dbReference>
<dbReference type="PANTHER" id="PTHR10000:SF8">
    <property type="entry name" value="HAD SUPERFAMILY HYDROLASE-LIKE, TYPE 3"/>
    <property type="match status" value="1"/>
</dbReference>
<dbReference type="PANTHER" id="PTHR10000">
    <property type="entry name" value="PHOSPHOSERINE PHOSPHATASE"/>
    <property type="match status" value="1"/>
</dbReference>
<dbReference type="Pfam" id="PF08282">
    <property type="entry name" value="Hydrolase_3"/>
    <property type="match status" value="1"/>
</dbReference>
<dbReference type="SUPFAM" id="SSF56784">
    <property type="entry name" value="HAD-like"/>
    <property type="match status" value="1"/>
</dbReference>
<dbReference type="PROSITE" id="PS01228">
    <property type="entry name" value="COF_1"/>
    <property type="match status" value="1"/>
</dbReference>
<dbReference type="PROSITE" id="PS01229">
    <property type="entry name" value="COF_2"/>
    <property type="match status" value="1"/>
</dbReference>
<feature type="chain" id="PRO_0000054443" description="Putative phosphatase in upp 3'region">
    <location>
        <begin position="1"/>
        <end position="282"/>
    </location>
</feature>
<feature type="active site" description="Nucleophile" evidence="1">
    <location>
        <position position="17"/>
    </location>
</feature>
<feature type="binding site" evidence="1">
    <location>
        <position position="17"/>
    </location>
    <ligand>
        <name>Mg(2+)</name>
        <dbReference type="ChEBI" id="CHEBI:18420"/>
    </ligand>
</feature>
<feature type="binding site" evidence="1">
    <location>
        <position position="18"/>
    </location>
    <ligand>
        <name>phosphate</name>
        <dbReference type="ChEBI" id="CHEBI:43474"/>
    </ligand>
</feature>
<feature type="binding site" evidence="1">
    <location>
        <position position="19"/>
    </location>
    <ligand>
        <name>Mg(2+)</name>
        <dbReference type="ChEBI" id="CHEBI:18420"/>
    </ligand>
</feature>
<feature type="binding site" evidence="1">
    <location>
        <begin position="53"/>
        <end position="54"/>
    </location>
    <ligand>
        <name>phosphate</name>
        <dbReference type="ChEBI" id="CHEBI:43474"/>
    </ligand>
</feature>
<feature type="binding site" evidence="1">
    <location>
        <position position="211"/>
    </location>
    <ligand>
        <name>phosphate</name>
        <dbReference type="ChEBI" id="CHEBI:43474"/>
    </ligand>
</feature>
<feature type="binding site" evidence="1">
    <location>
        <position position="234"/>
    </location>
    <ligand>
        <name>Mg(2+)</name>
        <dbReference type="ChEBI" id="CHEBI:18420"/>
    </ligand>
</feature>
<feature type="binding site" evidence="1">
    <location>
        <position position="235"/>
    </location>
    <ligand>
        <name>Mg(2+)</name>
        <dbReference type="ChEBI" id="CHEBI:18420"/>
    </ligand>
</feature>
<feature type="binding site" evidence="1">
    <location>
        <position position="237"/>
    </location>
    <ligand>
        <name>phosphate</name>
        <dbReference type="ChEBI" id="CHEBI:43474"/>
    </ligand>
</feature>
<protein>
    <recommendedName>
        <fullName>Putative phosphatase in upp 3'region</fullName>
        <ecNumber>3.1.3.-</ecNumber>
    </recommendedName>
</protein>
<comment type="cofactor">
    <cofactor evidence="1">
        <name>Mg(2+)</name>
        <dbReference type="ChEBI" id="CHEBI:18420"/>
    </cofactor>
</comment>
<comment type="similarity">
    <text evidence="2">Belongs to the HAD-like hydrolase superfamily. Cof family.</text>
</comment>
<evidence type="ECO:0000250" key="1"/>
<evidence type="ECO:0000305" key="2"/>
<sequence>MAYNKESKQRRFLFAIDLDGTLLADSANGTVHPKTEEAIKKAVAQGHIVSIITGRPWRSTLPVYEKLGLNAIVGNYNGAHIHNPADPFFIPAITYLDLNEVLYILGDEKVKKEITNYAIEGPDWVQLMHRDPNLERVFGFNQATKFRECINLEKIPLKPTGIVFDVKPDTDVLELLTYLKRRYGDLGEFSSWSKGEGLSPVFDITSIGIDKGKVISLIMRYYNIDIDDTVAMGDSYNDLSMYNVANVCVSPANAEPLIKKMSTVVMKQTNKEGAVGYFIDHS</sequence>